<reference key="1">
    <citation type="journal article" date="2009" name="Genome Res.">
        <title>Newly introduced genomic prophage islands are critical determinants of in vivo competitiveness in the Liverpool epidemic strain of Pseudomonas aeruginosa.</title>
        <authorList>
            <person name="Winstanley C."/>
            <person name="Langille M.G.I."/>
            <person name="Fothergill J.L."/>
            <person name="Kukavica-Ibrulj I."/>
            <person name="Paradis-Bleau C."/>
            <person name="Sanschagrin F."/>
            <person name="Thomson N.R."/>
            <person name="Winsor G.L."/>
            <person name="Quail M.A."/>
            <person name="Lennard N."/>
            <person name="Bignell A."/>
            <person name="Clarke L."/>
            <person name="Seeger K."/>
            <person name="Saunders D."/>
            <person name="Harris D."/>
            <person name="Parkhill J."/>
            <person name="Hancock R.E.W."/>
            <person name="Brinkman F.S.L."/>
            <person name="Levesque R.C."/>
        </authorList>
    </citation>
    <scope>NUCLEOTIDE SEQUENCE [LARGE SCALE GENOMIC DNA]</scope>
    <source>
        <strain>LESB58</strain>
    </source>
</reference>
<dbReference type="EC" id="4.3.1.7" evidence="1"/>
<dbReference type="EMBL" id="FM209186">
    <property type="protein sequence ID" value="CAW25678.1"/>
    <property type="molecule type" value="Genomic_DNA"/>
</dbReference>
<dbReference type="RefSeq" id="WP_003114907.1">
    <property type="nucleotide sequence ID" value="NC_011770.1"/>
</dbReference>
<dbReference type="SMR" id="B7V7T3"/>
<dbReference type="KEGG" id="pag:PLES_09511"/>
<dbReference type="HOGENOM" id="CLU_068224_1_0_6"/>
<dbReference type="UniPathway" id="UPA00560"/>
<dbReference type="GO" id="GO:0009350">
    <property type="term" value="C:ethanolamine ammonia-lyase complex"/>
    <property type="evidence" value="ECO:0007669"/>
    <property type="project" value="UniProtKB-UniRule"/>
</dbReference>
<dbReference type="GO" id="GO:0031471">
    <property type="term" value="C:ethanolamine degradation polyhedral organelle"/>
    <property type="evidence" value="ECO:0007669"/>
    <property type="project" value="UniProtKB-UniRule"/>
</dbReference>
<dbReference type="GO" id="GO:0031419">
    <property type="term" value="F:cobalamin binding"/>
    <property type="evidence" value="ECO:0007669"/>
    <property type="project" value="UniProtKB-UniRule"/>
</dbReference>
<dbReference type="GO" id="GO:0008851">
    <property type="term" value="F:ethanolamine ammonia-lyase activity"/>
    <property type="evidence" value="ECO:0007669"/>
    <property type="project" value="UniProtKB-UniRule"/>
</dbReference>
<dbReference type="GO" id="GO:0006520">
    <property type="term" value="P:amino acid metabolic process"/>
    <property type="evidence" value="ECO:0007669"/>
    <property type="project" value="InterPro"/>
</dbReference>
<dbReference type="GO" id="GO:0046336">
    <property type="term" value="P:ethanolamine catabolic process"/>
    <property type="evidence" value="ECO:0007669"/>
    <property type="project" value="UniProtKB-UniRule"/>
</dbReference>
<dbReference type="FunFam" id="1.10.30.40:FF:000001">
    <property type="entry name" value="Ethanolamine ammonia-lyase light chain"/>
    <property type="match status" value="1"/>
</dbReference>
<dbReference type="FunFam" id="3.40.50.11240:FF:000001">
    <property type="entry name" value="Ethanolamine ammonia-lyase light chain"/>
    <property type="match status" value="1"/>
</dbReference>
<dbReference type="Gene3D" id="3.40.50.11240">
    <property type="entry name" value="Ethanolamine ammonia-lyase light chain (EutC)"/>
    <property type="match status" value="1"/>
</dbReference>
<dbReference type="Gene3D" id="1.10.30.40">
    <property type="entry name" value="Ethanolamine ammonia-lyase light chain (EutC), N-terminal domain"/>
    <property type="match status" value="1"/>
</dbReference>
<dbReference type="HAMAP" id="MF_00601">
    <property type="entry name" value="EutC"/>
    <property type="match status" value="1"/>
</dbReference>
<dbReference type="InterPro" id="IPR009246">
    <property type="entry name" value="EutC"/>
</dbReference>
<dbReference type="InterPro" id="IPR042251">
    <property type="entry name" value="EutC_C"/>
</dbReference>
<dbReference type="InterPro" id="IPR042255">
    <property type="entry name" value="EutC_N"/>
</dbReference>
<dbReference type="NCBIfam" id="NF003971">
    <property type="entry name" value="PRK05465.1"/>
    <property type="match status" value="1"/>
</dbReference>
<dbReference type="PANTHER" id="PTHR39330">
    <property type="entry name" value="ETHANOLAMINE AMMONIA-LYASE LIGHT CHAIN"/>
    <property type="match status" value="1"/>
</dbReference>
<dbReference type="PANTHER" id="PTHR39330:SF1">
    <property type="entry name" value="ETHANOLAMINE AMMONIA-LYASE SMALL SUBUNIT"/>
    <property type="match status" value="1"/>
</dbReference>
<dbReference type="Pfam" id="PF05985">
    <property type="entry name" value="EutC"/>
    <property type="match status" value="1"/>
</dbReference>
<dbReference type="PIRSF" id="PIRSF018982">
    <property type="entry name" value="EutC"/>
    <property type="match status" value="1"/>
</dbReference>
<gene>
    <name evidence="1" type="primary">eutC</name>
    <name type="ordered locus">PLES_09511</name>
</gene>
<feature type="chain" id="PRO_1000130094" description="Ethanolamine ammonia-lyase small subunit">
    <location>
        <begin position="1"/>
        <end position="273"/>
    </location>
</feature>
<feature type="binding site" evidence="1">
    <location>
        <position position="164"/>
    </location>
    <ligand>
        <name>adenosylcob(III)alamin</name>
        <dbReference type="ChEBI" id="CHEBI:18408"/>
    </ligand>
</feature>
<feature type="binding site" evidence="1">
    <location>
        <position position="185"/>
    </location>
    <ligand>
        <name>adenosylcob(III)alamin</name>
        <dbReference type="ChEBI" id="CHEBI:18408"/>
    </ligand>
</feature>
<feature type="binding site" evidence="1">
    <location>
        <position position="214"/>
    </location>
    <ligand>
        <name>adenosylcob(III)alamin</name>
        <dbReference type="ChEBI" id="CHEBI:18408"/>
    </ligand>
</feature>
<name>EUTC_PSEA8</name>
<protein>
    <recommendedName>
        <fullName evidence="1">Ethanolamine ammonia-lyase small subunit</fullName>
        <shortName evidence="1">EAL small subunit</shortName>
        <ecNumber evidence="1">4.3.1.7</ecNumber>
    </recommendedName>
</protein>
<sequence>MNDKHLPDASAENPWLPLRQLTPARIALGRTGTSLPTRPQLDFQYAHAQARDAVHLPFDHAAISDGLRQRGRDSLLLHSAAADRHVYLQRPDLGRRLDEASVQRLREHAAGYDGQIDLAIVVADGLSALAVQRHTLPFLERLEEQALAEGWSLSPVVLVEQGRVAVADEIGELLRAKMSVILIGERPGLSSPDSLGLYFTWAPRVGLTDAYRNCISNVRLEGLSYGMAAHRLLYLMREACRRQLSGVNLKDEAEVQALDGEAPRTGNFLLARD</sequence>
<organism>
    <name type="scientific">Pseudomonas aeruginosa (strain LESB58)</name>
    <dbReference type="NCBI Taxonomy" id="557722"/>
    <lineage>
        <taxon>Bacteria</taxon>
        <taxon>Pseudomonadati</taxon>
        <taxon>Pseudomonadota</taxon>
        <taxon>Gammaproteobacteria</taxon>
        <taxon>Pseudomonadales</taxon>
        <taxon>Pseudomonadaceae</taxon>
        <taxon>Pseudomonas</taxon>
    </lineage>
</organism>
<accession>B7V7T3</accession>
<keyword id="KW-1283">Bacterial microcompartment</keyword>
<keyword id="KW-0846">Cobalamin</keyword>
<keyword id="KW-0170">Cobalt</keyword>
<keyword id="KW-0456">Lyase</keyword>
<evidence type="ECO:0000255" key="1">
    <source>
        <dbReference type="HAMAP-Rule" id="MF_00601"/>
    </source>
</evidence>
<proteinExistence type="inferred from homology"/>
<comment type="function">
    <text evidence="1">Catalyzes the deamination of various vicinal amino-alcohols to oxo compounds. Allows this organism to utilize ethanolamine as the sole source of nitrogen and carbon in the presence of external vitamin B12.</text>
</comment>
<comment type="catalytic activity">
    <reaction evidence="1">
        <text>ethanolamine = acetaldehyde + NH4(+)</text>
        <dbReference type="Rhea" id="RHEA:15313"/>
        <dbReference type="ChEBI" id="CHEBI:15343"/>
        <dbReference type="ChEBI" id="CHEBI:28938"/>
        <dbReference type="ChEBI" id="CHEBI:57603"/>
        <dbReference type="EC" id="4.3.1.7"/>
    </reaction>
</comment>
<comment type="cofactor">
    <cofactor evidence="1">
        <name>adenosylcob(III)alamin</name>
        <dbReference type="ChEBI" id="CHEBI:18408"/>
    </cofactor>
    <text evidence="1">Binds between the large and small subunits.</text>
</comment>
<comment type="pathway">
    <text evidence="1">Amine and polyamine degradation; ethanolamine degradation.</text>
</comment>
<comment type="subunit">
    <text evidence="1">The basic unit is a heterodimer which dimerizes to form tetramers. The heterotetramers trimerize; 6 large subunits form a core ring with 6 small subunits projecting outwards.</text>
</comment>
<comment type="subcellular location">
    <subcellularLocation>
        <location evidence="1">Bacterial microcompartment</location>
    </subcellularLocation>
</comment>
<comment type="similarity">
    <text evidence="1">Belongs to the EutC family.</text>
</comment>